<dbReference type="EC" id="4.1.1.98" evidence="1"/>
<dbReference type="EMBL" id="CP000094">
    <property type="protein sequence ID" value="ABA77191.1"/>
    <property type="molecule type" value="Genomic_DNA"/>
</dbReference>
<dbReference type="RefSeq" id="WP_011336484.1">
    <property type="nucleotide sequence ID" value="NC_007492.2"/>
</dbReference>
<dbReference type="SMR" id="Q3K4W3"/>
<dbReference type="KEGG" id="pfo:Pfl01_5454"/>
<dbReference type="eggNOG" id="COG0043">
    <property type="taxonomic scope" value="Bacteria"/>
</dbReference>
<dbReference type="HOGENOM" id="CLU_023348_4_1_6"/>
<dbReference type="UniPathway" id="UPA00232"/>
<dbReference type="Proteomes" id="UP000002704">
    <property type="component" value="Chromosome"/>
</dbReference>
<dbReference type="GO" id="GO:0005829">
    <property type="term" value="C:cytosol"/>
    <property type="evidence" value="ECO:0007669"/>
    <property type="project" value="TreeGrafter"/>
</dbReference>
<dbReference type="GO" id="GO:0005886">
    <property type="term" value="C:plasma membrane"/>
    <property type="evidence" value="ECO:0007669"/>
    <property type="project" value="UniProtKB-SubCell"/>
</dbReference>
<dbReference type="GO" id="GO:0008694">
    <property type="term" value="F:3-octaprenyl-4-hydroxybenzoate carboxy-lyase activity"/>
    <property type="evidence" value="ECO:0007669"/>
    <property type="project" value="UniProtKB-UniRule"/>
</dbReference>
<dbReference type="GO" id="GO:0046872">
    <property type="term" value="F:metal ion binding"/>
    <property type="evidence" value="ECO:0007669"/>
    <property type="project" value="UniProtKB-KW"/>
</dbReference>
<dbReference type="GO" id="GO:0006744">
    <property type="term" value="P:ubiquinone biosynthetic process"/>
    <property type="evidence" value="ECO:0007669"/>
    <property type="project" value="UniProtKB-UniRule"/>
</dbReference>
<dbReference type="FunFam" id="1.20.5.570:FF:000001">
    <property type="entry name" value="3-octaprenyl-4-hydroxybenzoate carboxy-lyase"/>
    <property type="match status" value="1"/>
</dbReference>
<dbReference type="FunFam" id="3.40.1670.10:FF:000001">
    <property type="entry name" value="3-octaprenyl-4-hydroxybenzoate carboxy-lyase"/>
    <property type="match status" value="1"/>
</dbReference>
<dbReference type="Gene3D" id="1.20.5.570">
    <property type="entry name" value="Single helix bin"/>
    <property type="match status" value="1"/>
</dbReference>
<dbReference type="Gene3D" id="3.40.1670.10">
    <property type="entry name" value="UbiD C-terminal domain-like"/>
    <property type="match status" value="1"/>
</dbReference>
<dbReference type="HAMAP" id="MF_01636">
    <property type="entry name" value="UbiD"/>
    <property type="match status" value="1"/>
</dbReference>
<dbReference type="InterPro" id="IPR002830">
    <property type="entry name" value="UbiD"/>
</dbReference>
<dbReference type="InterPro" id="IPR049381">
    <property type="entry name" value="UbiD-like_C"/>
</dbReference>
<dbReference type="InterPro" id="IPR049383">
    <property type="entry name" value="UbiD-like_N"/>
</dbReference>
<dbReference type="InterPro" id="IPR023677">
    <property type="entry name" value="UbiD_bacteria"/>
</dbReference>
<dbReference type="InterPro" id="IPR048304">
    <property type="entry name" value="UbiD_Rift_dom"/>
</dbReference>
<dbReference type="NCBIfam" id="NF008175">
    <property type="entry name" value="PRK10922.1"/>
    <property type="match status" value="1"/>
</dbReference>
<dbReference type="NCBIfam" id="TIGR00148">
    <property type="entry name" value="UbiD family decarboxylase"/>
    <property type="match status" value="1"/>
</dbReference>
<dbReference type="PANTHER" id="PTHR30108">
    <property type="entry name" value="3-OCTAPRENYL-4-HYDROXYBENZOATE CARBOXY-LYASE-RELATED"/>
    <property type="match status" value="1"/>
</dbReference>
<dbReference type="PANTHER" id="PTHR30108:SF17">
    <property type="entry name" value="FERULIC ACID DECARBOXYLASE 1"/>
    <property type="match status" value="1"/>
</dbReference>
<dbReference type="Pfam" id="PF01977">
    <property type="entry name" value="UbiD"/>
    <property type="match status" value="1"/>
</dbReference>
<dbReference type="Pfam" id="PF20696">
    <property type="entry name" value="UbiD_C"/>
    <property type="match status" value="1"/>
</dbReference>
<dbReference type="Pfam" id="PF20695">
    <property type="entry name" value="UbiD_N"/>
    <property type="match status" value="1"/>
</dbReference>
<dbReference type="SUPFAM" id="SSF50475">
    <property type="entry name" value="FMN-binding split barrel"/>
    <property type="match status" value="1"/>
</dbReference>
<dbReference type="SUPFAM" id="SSF143968">
    <property type="entry name" value="UbiD C-terminal domain-like"/>
    <property type="match status" value="1"/>
</dbReference>
<keyword id="KW-1003">Cell membrane</keyword>
<keyword id="KW-0210">Decarboxylase</keyword>
<keyword id="KW-0285">Flavoprotein</keyword>
<keyword id="KW-0288">FMN</keyword>
<keyword id="KW-0456">Lyase</keyword>
<keyword id="KW-0464">Manganese</keyword>
<keyword id="KW-0472">Membrane</keyword>
<keyword id="KW-0479">Metal-binding</keyword>
<keyword id="KW-0831">Ubiquinone biosynthesis</keyword>
<proteinExistence type="inferred from homology"/>
<organism>
    <name type="scientific">Pseudomonas fluorescens (strain Pf0-1)</name>
    <dbReference type="NCBI Taxonomy" id="205922"/>
    <lineage>
        <taxon>Bacteria</taxon>
        <taxon>Pseudomonadati</taxon>
        <taxon>Pseudomonadota</taxon>
        <taxon>Gammaproteobacteria</taxon>
        <taxon>Pseudomonadales</taxon>
        <taxon>Pseudomonadaceae</taxon>
        <taxon>Pseudomonas</taxon>
    </lineage>
</organism>
<accession>Q3K4W3</accession>
<sequence length="488" mass="54718">MKFKDLRDFVQQLEQRGELKRIQIPVSPVLEMTEVCDRTLRAKGPALLFEKPTGYDIPVLGNLFGTPERVAMGMGAESVSELREIGKLLAFLKEPEPPKGLKDAWSKLPIFRKIIAMAPKVIKDAPCQEVVIEGDDVDLAMLPVQTCWSGDVAPLITWGLTVTKGPNKDRQNLGIYRQQVIGRNKVIMRWLSHRGGALDFREWCEKHPGQPFPVSVALGADPATILGAVTPVPDSLSEYAFAGLLRDSRTELVKCRGNDLQVPATAEIILEGVIHPGEMADEGPYGDHTGYYNEVDSFPVFTVERITHRIKPIYHSTYTGRPPDEPAILGVALNEVFVPILQKQFPEITDFYLPPEGCSYRMAVVTMKKSYPGHAKRVMLGVWSFLRQFMYTKFVIVTDDDINARDWNDVIWAITTRMDPKRDTVMIDNTPIDYLDFASPVSGLGSKMGLDATHKWPGETTREWGRVIVKDDAVTQRIDAIWNQLGID</sequence>
<feature type="chain" id="PRO_0000267681" description="3-octaprenyl-4-hydroxybenzoate carboxy-lyase">
    <location>
        <begin position="1"/>
        <end position="488"/>
    </location>
</feature>
<feature type="active site" description="Proton donor" evidence="1">
    <location>
        <position position="287"/>
    </location>
</feature>
<feature type="binding site" evidence="1">
    <location>
        <position position="172"/>
    </location>
    <ligand>
        <name>Mn(2+)</name>
        <dbReference type="ChEBI" id="CHEBI:29035"/>
    </ligand>
</feature>
<feature type="binding site" evidence="1">
    <location>
        <begin position="175"/>
        <end position="177"/>
    </location>
    <ligand>
        <name>prenylated FMN</name>
        <dbReference type="ChEBI" id="CHEBI:87746"/>
    </ligand>
</feature>
<feature type="binding site" evidence="1">
    <location>
        <begin position="189"/>
        <end position="191"/>
    </location>
    <ligand>
        <name>prenylated FMN</name>
        <dbReference type="ChEBI" id="CHEBI:87746"/>
    </ligand>
</feature>
<feature type="binding site" evidence="1">
    <location>
        <begin position="194"/>
        <end position="195"/>
    </location>
    <ligand>
        <name>prenylated FMN</name>
        <dbReference type="ChEBI" id="CHEBI:87746"/>
    </ligand>
</feature>
<feature type="binding site" evidence="1">
    <location>
        <position position="238"/>
    </location>
    <ligand>
        <name>Mn(2+)</name>
        <dbReference type="ChEBI" id="CHEBI:29035"/>
    </ligand>
</feature>
<gene>
    <name evidence="1" type="primary">ubiD</name>
    <name type="ordered locus">Pfl01_5454</name>
</gene>
<protein>
    <recommendedName>
        <fullName evidence="1">3-octaprenyl-4-hydroxybenzoate carboxy-lyase</fullName>
        <ecNumber evidence="1">4.1.1.98</ecNumber>
    </recommendedName>
    <alternativeName>
        <fullName evidence="1">Polyprenyl p-hydroxybenzoate decarboxylase</fullName>
    </alternativeName>
</protein>
<name>UBID_PSEPF</name>
<evidence type="ECO:0000255" key="1">
    <source>
        <dbReference type="HAMAP-Rule" id="MF_01636"/>
    </source>
</evidence>
<reference key="1">
    <citation type="journal article" date="2009" name="Genome Biol.">
        <title>Genomic and genetic analyses of diversity and plant interactions of Pseudomonas fluorescens.</title>
        <authorList>
            <person name="Silby M.W."/>
            <person name="Cerdeno-Tarraga A.M."/>
            <person name="Vernikos G.S."/>
            <person name="Giddens S.R."/>
            <person name="Jackson R.W."/>
            <person name="Preston G.M."/>
            <person name="Zhang X.-X."/>
            <person name="Moon C.D."/>
            <person name="Gehrig S.M."/>
            <person name="Godfrey S.A.C."/>
            <person name="Knight C.G."/>
            <person name="Malone J.G."/>
            <person name="Robinson Z."/>
            <person name="Spiers A.J."/>
            <person name="Harris S."/>
            <person name="Challis G.L."/>
            <person name="Yaxley A.M."/>
            <person name="Harris D."/>
            <person name="Seeger K."/>
            <person name="Murphy L."/>
            <person name="Rutter S."/>
            <person name="Squares R."/>
            <person name="Quail M.A."/>
            <person name="Saunders E."/>
            <person name="Mavromatis K."/>
            <person name="Brettin T.S."/>
            <person name="Bentley S.D."/>
            <person name="Hothersall J."/>
            <person name="Stephens E."/>
            <person name="Thomas C.M."/>
            <person name="Parkhill J."/>
            <person name="Levy S.B."/>
            <person name="Rainey P.B."/>
            <person name="Thomson N.R."/>
        </authorList>
    </citation>
    <scope>NUCLEOTIDE SEQUENCE [LARGE SCALE GENOMIC DNA]</scope>
    <source>
        <strain>Pf0-1</strain>
    </source>
</reference>
<comment type="function">
    <text evidence="1">Catalyzes the decarboxylation of 3-octaprenyl-4-hydroxy benzoate to 2-octaprenylphenol, an intermediate step in ubiquinone biosynthesis.</text>
</comment>
<comment type="catalytic activity">
    <reaction evidence="1">
        <text>a 4-hydroxy-3-(all-trans-polyprenyl)benzoate + H(+) = a 2-(all-trans-polyprenyl)phenol + CO2</text>
        <dbReference type="Rhea" id="RHEA:41680"/>
        <dbReference type="Rhea" id="RHEA-COMP:9514"/>
        <dbReference type="Rhea" id="RHEA-COMP:9516"/>
        <dbReference type="ChEBI" id="CHEBI:1269"/>
        <dbReference type="ChEBI" id="CHEBI:15378"/>
        <dbReference type="ChEBI" id="CHEBI:16526"/>
        <dbReference type="ChEBI" id="CHEBI:78396"/>
        <dbReference type="EC" id="4.1.1.98"/>
    </reaction>
</comment>
<comment type="cofactor">
    <cofactor evidence="1">
        <name>prenylated FMN</name>
        <dbReference type="ChEBI" id="CHEBI:87746"/>
    </cofactor>
    <text evidence="1">Binds 1 prenylated FMN per subunit.</text>
</comment>
<comment type="cofactor">
    <cofactor evidence="1">
        <name>Mn(2+)</name>
        <dbReference type="ChEBI" id="CHEBI:29035"/>
    </cofactor>
</comment>
<comment type="pathway">
    <text evidence="1">Cofactor biosynthesis; ubiquinone biosynthesis.</text>
</comment>
<comment type="subunit">
    <text evidence="1">Homohexamer.</text>
</comment>
<comment type="subcellular location">
    <subcellularLocation>
        <location evidence="1">Cell membrane</location>
        <topology evidence="1">Peripheral membrane protein</topology>
    </subcellularLocation>
</comment>
<comment type="similarity">
    <text evidence="1">Belongs to the UbiD family.</text>
</comment>